<proteinExistence type="inferred from homology"/>
<protein>
    <recommendedName>
        <fullName evidence="1">Deoxyribose-phosphate aldolase</fullName>
        <shortName evidence="1">DERA</shortName>
        <ecNumber evidence="1">4.1.2.4</ecNumber>
    </recommendedName>
    <alternativeName>
        <fullName evidence="1">2-deoxy-D-ribose 5-phosphate aldolase</fullName>
    </alternativeName>
    <alternativeName>
        <fullName evidence="1">Phosphodeoxyriboaldolase</fullName>
        <shortName evidence="1">Deoxyriboaldolase</shortName>
    </alternativeName>
</protein>
<feature type="chain" id="PRO_1000146961" description="Deoxyribose-phosphate aldolase">
    <location>
        <begin position="1"/>
        <end position="259"/>
    </location>
</feature>
<feature type="active site" description="Proton donor/acceptor" evidence="1">
    <location>
        <position position="102"/>
    </location>
</feature>
<feature type="active site" description="Schiff-base intermediate with acetaldehyde" evidence="1">
    <location>
        <position position="167"/>
    </location>
</feature>
<feature type="active site" description="Proton donor/acceptor" evidence="1">
    <location>
        <position position="201"/>
    </location>
</feature>
<gene>
    <name evidence="1" type="primary">deoC</name>
    <name type="ordered locus">E2348C_4679</name>
</gene>
<sequence length="259" mass="27748">MTDLKASSLRALKLMDLTTLNDDDTDEKVIALCHQAKTPVGNTAAICIYPRFIPIARKTLKEQGTPEIRIATVTNFPHGNDDIEIALAETRAAIAYGADEVDVVFPYRALMAGNEQVGFDLVKACKEACAAANVLLKVIIETGELKDEALIRKASEISIKAGADFIKTSTGKVAVNATPESARIMMEVIRDMGVEKTVGFKPAGGVRTAEDAQKYLAIADELFGADWADARHYRFGASSLLASLLKALGHGDGKSASSY</sequence>
<dbReference type="EC" id="4.1.2.4" evidence="1"/>
<dbReference type="EMBL" id="FM180568">
    <property type="protein sequence ID" value="CAS12227.1"/>
    <property type="molecule type" value="Genomic_DNA"/>
</dbReference>
<dbReference type="RefSeq" id="WP_001295412.1">
    <property type="nucleotide sequence ID" value="NC_011601.1"/>
</dbReference>
<dbReference type="SMR" id="B7UR09"/>
<dbReference type="GeneID" id="93777463"/>
<dbReference type="KEGG" id="ecg:E2348C_4679"/>
<dbReference type="HOGENOM" id="CLU_053595_3_1_6"/>
<dbReference type="UniPathway" id="UPA00002">
    <property type="reaction ID" value="UER00468"/>
</dbReference>
<dbReference type="Proteomes" id="UP000008205">
    <property type="component" value="Chromosome"/>
</dbReference>
<dbReference type="GO" id="GO:0005737">
    <property type="term" value="C:cytoplasm"/>
    <property type="evidence" value="ECO:0007669"/>
    <property type="project" value="UniProtKB-SubCell"/>
</dbReference>
<dbReference type="GO" id="GO:0004139">
    <property type="term" value="F:deoxyribose-phosphate aldolase activity"/>
    <property type="evidence" value="ECO:0007669"/>
    <property type="project" value="UniProtKB-UniRule"/>
</dbReference>
<dbReference type="GO" id="GO:0006018">
    <property type="term" value="P:2-deoxyribose 1-phosphate catabolic process"/>
    <property type="evidence" value="ECO:0007669"/>
    <property type="project" value="UniProtKB-UniRule"/>
</dbReference>
<dbReference type="GO" id="GO:0016052">
    <property type="term" value="P:carbohydrate catabolic process"/>
    <property type="evidence" value="ECO:0007669"/>
    <property type="project" value="TreeGrafter"/>
</dbReference>
<dbReference type="GO" id="GO:0009264">
    <property type="term" value="P:deoxyribonucleotide catabolic process"/>
    <property type="evidence" value="ECO:0007669"/>
    <property type="project" value="InterPro"/>
</dbReference>
<dbReference type="CDD" id="cd00959">
    <property type="entry name" value="DeoC"/>
    <property type="match status" value="1"/>
</dbReference>
<dbReference type="FunFam" id="3.20.20.70:FF:000034">
    <property type="entry name" value="Deoxyribose-phosphate aldolase"/>
    <property type="match status" value="1"/>
</dbReference>
<dbReference type="Gene3D" id="3.20.20.70">
    <property type="entry name" value="Aldolase class I"/>
    <property type="match status" value="1"/>
</dbReference>
<dbReference type="HAMAP" id="MF_00592">
    <property type="entry name" value="DeoC_type2"/>
    <property type="match status" value="1"/>
</dbReference>
<dbReference type="InterPro" id="IPR013785">
    <property type="entry name" value="Aldolase_TIM"/>
</dbReference>
<dbReference type="InterPro" id="IPR011343">
    <property type="entry name" value="DeoC"/>
</dbReference>
<dbReference type="InterPro" id="IPR002915">
    <property type="entry name" value="DeoC/FbaB/LacD_aldolase"/>
</dbReference>
<dbReference type="InterPro" id="IPR023649">
    <property type="entry name" value="DeoC_typeII"/>
</dbReference>
<dbReference type="NCBIfam" id="TIGR00126">
    <property type="entry name" value="deoC"/>
    <property type="match status" value="1"/>
</dbReference>
<dbReference type="PANTHER" id="PTHR10889">
    <property type="entry name" value="DEOXYRIBOSE-PHOSPHATE ALDOLASE"/>
    <property type="match status" value="1"/>
</dbReference>
<dbReference type="PANTHER" id="PTHR10889:SF3">
    <property type="entry name" value="DEOXYRIBOSE-PHOSPHATE ALDOLASE"/>
    <property type="match status" value="1"/>
</dbReference>
<dbReference type="Pfam" id="PF01791">
    <property type="entry name" value="DeoC"/>
    <property type="match status" value="1"/>
</dbReference>
<dbReference type="PIRSF" id="PIRSF001357">
    <property type="entry name" value="DeoC"/>
    <property type="match status" value="1"/>
</dbReference>
<dbReference type="SMART" id="SM01133">
    <property type="entry name" value="DeoC"/>
    <property type="match status" value="1"/>
</dbReference>
<dbReference type="SUPFAM" id="SSF51569">
    <property type="entry name" value="Aldolase"/>
    <property type="match status" value="1"/>
</dbReference>
<organism>
    <name type="scientific">Escherichia coli O127:H6 (strain E2348/69 / EPEC)</name>
    <dbReference type="NCBI Taxonomy" id="574521"/>
    <lineage>
        <taxon>Bacteria</taxon>
        <taxon>Pseudomonadati</taxon>
        <taxon>Pseudomonadota</taxon>
        <taxon>Gammaproteobacteria</taxon>
        <taxon>Enterobacterales</taxon>
        <taxon>Enterobacteriaceae</taxon>
        <taxon>Escherichia</taxon>
    </lineage>
</organism>
<accession>B7UR09</accession>
<keyword id="KW-0963">Cytoplasm</keyword>
<keyword id="KW-0456">Lyase</keyword>
<keyword id="KW-1185">Reference proteome</keyword>
<keyword id="KW-0704">Schiff base</keyword>
<name>DEOC_ECO27</name>
<evidence type="ECO:0000255" key="1">
    <source>
        <dbReference type="HAMAP-Rule" id="MF_00592"/>
    </source>
</evidence>
<reference key="1">
    <citation type="journal article" date="2009" name="J. Bacteriol.">
        <title>Complete genome sequence and comparative genome analysis of enteropathogenic Escherichia coli O127:H6 strain E2348/69.</title>
        <authorList>
            <person name="Iguchi A."/>
            <person name="Thomson N.R."/>
            <person name="Ogura Y."/>
            <person name="Saunders D."/>
            <person name="Ooka T."/>
            <person name="Henderson I.R."/>
            <person name="Harris D."/>
            <person name="Asadulghani M."/>
            <person name="Kurokawa K."/>
            <person name="Dean P."/>
            <person name="Kenny B."/>
            <person name="Quail M.A."/>
            <person name="Thurston S."/>
            <person name="Dougan G."/>
            <person name="Hayashi T."/>
            <person name="Parkhill J."/>
            <person name="Frankel G."/>
        </authorList>
    </citation>
    <scope>NUCLEOTIDE SEQUENCE [LARGE SCALE GENOMIC DNA]</scope>
    <source>
        <strain>E2348/69 / EPEC</strain>
    </source>
</reference>
<comment type="function">
    <text evidence="1">Catalyzes a reversible aldol reaction between acetaldehyde and D-glyceraldehyde 3-phosphate to generate 2-deoxy-D-ribose 5-phosphate.</text>
</comment>
<comment type="catalytic activity">
    <reaction evidence="1">
        <text>2-deoxy-D-ribose 5-phosphate = D-glyceraldehyde 3-phosphate + acetaldehyde</text>
        <dbReference type="Rhea" id="RHEA:12821"/>
        <dbReference type="ChEBI" id="CHEBI:15343"/>
        <dbReference type="ChEBI" id="CHEBI:59776"/>
        <dbReference type="ChEBI" id="CHEBI:62877"/>
        <dbReference type="EC" id="4.1.2.4"/>
    </reaction>
</comment>
<comment type="pathway">
    <text evidence="1">Carbohydrate degradation; 2-deoxy-D-ribose 1-phosphate degradation; D-glyceraldehyde 3-phosphate and acetaldehyde from 2-deoxy-alpha-D-ribose 1-phosphate: step 2/2.</text>
</comment>
<comment type="subcellular location">
    <subcellularLocation>
        <location evidence="1">Cytoplasm</location>
    </subcellularLocation>
</comment>
<comment type="similarity">
    <text evidence="1">Belongs to the DeoC/FbaB aldolase family. DeoC type 2 subfamily.</text>
</comment>